<feature type="chain" id="PRO_0000362235" description="ATP synthase subunit a">
    <location>
        <begin position="1"/>
        <end position="242"/>
    </location>
</feature>
<feature type="transmembrane region" description="Helical" evidence="1">
    <location>
        <begin position="23"/>
        <end position="43"/>
    </location>
</feature>
<feature type="transmembrane region" description="Helical" evidence="1">
    <location>
        <begin position="62"/>
        <end position="82"/>
    </location>
</feature>
<feature type="transmembrane region" description="Helical" evidence="1">
    <location>
        <begin position="84"/>
        <end position="104"/>
    </location>
</feature>
<feature type="transmembrane region" description="Helical" evidence="1">
    <location>
        <begin position="113"/>
        <end position="133"/>
    </location>
</feature>
<feature type="transmembrane region" description="Helical" evidence="1">
    <location>
        <begin position="143"/>
        <end position="163"/>
    </location>
</feature>
<feature type="transmembrane region" description="Helical" evidence="1">
    <location>
        <begin position="176"/>
        <end position="196"/>
    </location>
</feature>
<feature type="transmembrane region" description="Helical" evidence="1">
    <location>
        <begin position="201"/>
        <end position="221"/>
    </location>
</feature>
<evidence type="ECO:0000255" key="1">
    <source>
        <dbReference type="HAMAP-Rule" id="MF_01393"/>
    </source>
</evidence>
<dbReference type="EMBL" id="CP000235">
    <property type="protein sequence ID" value="ABD43406.1"/>
    <property type="molecule type" value="Genomic_DNA"/>
</dbReference>
<dbReference type="SMR" id="Q2GIS5"/>
<dbReference type="STRING" id="212042.APH_1192"/>
<dbReference type="PaxDb" id="212042-APH_1192"/>
<dbReference type="EnsemblBacteria" id="ABD43406">
    <property type="protein sequence ID" value="ABD43406"/>
    <property type="gene ID" value="APH_1192"/>
</dbReference>
<dbReference type="KEGG" id="aph:APH_1192"/>
<dbReference type="eggNOG" id="COG0356">
    <property type="taxonomic scope" value="Bacteria"/>
</dbReference>
<dbReference type="HOGENOM" id="CLU_041018_0_2_5"/>
<dbReference type="Proteomes" id="UP000001943">
    <property type="component" value="Chromosome"/>
</dbReference>
<dbReference type="GO" id="GO:0005886">
    <property type="term" value="C:plasma membrane"/>
    <property type="evidence" value="ECO:0007669"/>
    <property type="project" value="UniProtKB-SubCell"/>
</dbReference>
<dbReference type="GO" id="GO:0045259">
    <property type="term" value="C:proton-transporting ATP synthase complex"/>
    <property type="evidence" value="ECO:0007669"/>
    <property type="project" value="UniProtKB-KW"/>
</dbReference>
<dbReference type="GO" id="GO:0046933">
    <property type="term" value="F:proton-transporting ATP synthase activity, rotational mechanism"/>
    <property type="evidence" value="ECO:0007669"/>
    <property type="project" value="UniProtKB-UniRule"/>
</dbReference>
<dbReference type="CDD" id="cd00310">
    <property type="entry name" value="ATP-synt_Fo_a_6"/>
    <property type="match status" value="1"/>
</dbReference>
<dbReference type="Gene3D" id="1.20.120.220">
    <property type="entry name" value="ATP synthase, F0 complex, subunit A"/>
    <property type="match status" value="1"/>
</dbReference>
<dbReference type="HAMAP" id="MF_01393">
    <property type="entry name" value="ATP_synth_a_bact"/>
    <property type="match status" value="1"/>
</dbReference>
<dbReference type="InterPro" id="IPR000568">
    <property type="entry name" value="ATP_synth_F0_asu"/>
</dbReference>
<dbReference type="InterPro" id="IPR023011">
    <property type="entry name" value="ATP_synth_F0_asu_AS"/>
</dbReference>
<dbReference type="InterPro" id="IPR045083">
    <property type="entry name" value="ATP_synth_F0_asu_bact/mt"/>
</dbReference>
<dbReference type="InterPro" id="IPR035908">
    <property type="entry name" value="F0_ATP_A_sf"/>
</dbReference>
<dbReference type="NCBIfam" id="TIGR01131">
    <property type="entry name" value="ATP_synt_6_or_A"/>
    <property type="match status" value="1"/>
</dbReference>
<dbReference type="NCBIfam" id="NF004482">
    <property type="entry name" value="PRK05815.2-4"/>
    <property type="match status" value="1"/>
</dbReference>
<dbReference type="PANTHER" id="PTHR11410">
    <property type="entry name" value="ATP SYNTHASE SUBUNIT A"/>
    <property type="match status" value="1"/>
</dbReference>
<dbReference type="PANTHER" id="PTHR11410:SF0">
    <property type="entry name" value="ATP SYNTHASE SUBUNIT A"/>
    <property type="match status" value="1"/>
</dbReference>
<dbReference type="Pfam" id="PF00119">
    <property type="entry name" value="ATP-synt_A"/>
    <property type="match status" value="1"/>
</dbReference>
<dbReference type="PRINTS" id="PR00123">
    <property type="entry name" value="ATPASEA"/>
</dbReference>
<dbReference type="SUPFAM" id="SSF81336">
    <property type="entry name" value="F1F0 ATP synthase subunit A"/>
    <property type="match status" value="1"/>
</dbReference>
<dbReference type="PROSITE" id="PS00449">
    <property type="entry name" value="ATPASE_A"/>
    <property type="match status" value="1"/>
</dbReference>
<keyword id="KW-0066">ATP synthesis</keyword>
<keyword id="KW-0997">Cell inner membrane</keyword>
<keyword id="KW-1003">Cell membrane</keyword>
<keyword id="KW-0138">CF(0)</keyword>
<keyword id="KW-0375">Hydrogen ion transport</keyword>
<keyword id="KW-0406">Ion transport</keyword>
<keyword id="KW-0472">Membrane</keyword>
<keyword id="KW-0812">Transmembrane</keyword>
<keyword id="KW-1133">Transmembrane helix</keyword>
<keyword id="KW-0813">Transport</keyword>
<name>ATP6_ANAPZ</name>
<proteinExistence type="inferred from homology"/>
<gene>
    <name evidence="1" type="primary">atpB</name>
    <name type="ordered locus">APH_1192</name>
</gene>
<protein>
    <recommendedName>
        <fullName evidence="1">ATP synthase subunit a</fullName>
    </recommendedName>
    <alternativeName>
        <fullName evidence="1">ATP synthase F0 sector subunit a</fullName>
    </alternativeName>
    <alternativeName>
        <fullName evidence="1">F-ATPase subunit 6</fullName>
    </alternativeName>
</protein>
<accession>Q2GIS5</accession>
<reference key="1">
    <citation type="journal article" date="2006" name="PLoS Genet.">
        <title>Comparative genomics of emerging human ehrlichiosis agents.</title>
        <authorList>
            <person name="Dunning Hotopp J.C."/>
            <person name="Lin M."/>
            <person name="Madupu R."/>
            <person name="Crabtree J."/>
            <person name="Angiuoli S.V."/>
            <person name="Eisen J.A."/>
            <person name="Seshadri R."/>
            <person name="Ren Q."/>
            <person name="Wu M."/>
            <person name="Utterback T.R."/>
            <person name="Smith S."/>
            <person name="Lewis M."/>
            <person name="Khouri H."/>
            <person name="Zhang C."/>
            <person name="Niu H."/>
            <person name="Lin Q."/>
            <person name="Ohashi N."/>
            <person name="Zhi N."/>
            <person name="Nelson W.C."/>
            <person name="Brinkac L.M."/>
            <person name="Dodson R.J."/>
            <person name="Rosovitz M.J."/>
            <person name="Sundaram J.P."/>
            <person name="Daugherty S.C."/>
            <person name="Davidsen T."/>
            <person name="Durkin A.S."/>
            <person name="Gwinn M.L."/>
            <person name="Haft D.H."/>
            <person name="Selengut J.D."/>
            <person name="Sullivan S.A."/>
            <person name="Zafar N."/>
            <person name="Zhou L."/>
            <person name="Benahmed F."/>
            <person name="Forberger H."/>
            <person name="Halpin R."/>
            <person name="Mulligan S."/>
            <person name="Robinson J."/>
            <person name="White O."/>
            <person name="Rikihisa Y."/>
            <person name="Tettelin H."/>
        </authorList>
    </citation>
    <scope>NUCLEOTIDE SEQUENCE [LARGE SCALE GENOMIC DNA]</scope>
    <source>
        <strain>HZ</strain>
    </source>
</reference>
<comment type="function">
    <text evidence="1">Key component of the proton channel; it plays a direct role in the translocation of protons across the membrane.</text>
</comment>
<comment type="subunit">
    <text evidence="1">F-type ATPases have 2 components, CF(1) - the catalytic core - and CF(0) - the membrane proton channel. CF(1) has five subunits: alpha(3), beta(3), gamma(1), delta(1), epsilon(1). CF(0) has three main subunits: a(1), b(2) and c(9-12). The alpha and beta chains form an alternating ring which encloses part of the gamma chain. CF(1) is attached to CF(0) by a central stalk formed by the gamma and epsilon chains, while a peripheral stalk is formed by the delta and b chains.</text>
</comment>
<comment type="subcellular location">
    <subcellularLocation>
        <location evidence="1">Cell inner membrane</location>
        <topology evidence="1">Multi-pass membrane protein</topology>
    </subcellularLocation>
</comment>
<comment type="similarity">
    <text evidence="1">Belongs to the ATPase A chain family.</text>
</comment>
<sequence>MSPLEQFKVVRLLEIPMPFGMDISFTNCALFMILASLVSAVLLCCALRKRTDGSSSMSHTAVELIYNFVVGAIESNAGVGGLRYIPFVLSIFLFVLACNIIGILPLGFTATSHVSVTLALSVVVCASVTVLGFNHQGLHFLRIFLPEGTPLWLAPMMVFIKLFAYLARPVSLAIRLAANMIAGHTIIAVIAEFVLKMHPVLAPLPFAFIMVLIAFEIFVAILQAYIFTVLTTVYLSDAVAGH</sequence>
<organism>
    <name type="scientific">Anaplasma phagocytophilum (strain HZ)</name>
    <dbReference type="NCBI Taxonomy" id="212042"/>
    <lineage>
        <taxon>Bacteria</taxon>
        <taxon>Pseudomonadati</taxon>
        <taxon>Pseudomonadota</taxon>
        <taxon>Alphaproteobacteria</taxon>
        <taxon>Rickettsiales</taxon>
        <taxon>Anaplasmataceae</taxon>
        <taxon>Anaplasma</taxon>
        <taxon>phagocytophilum group</taxon>
    </lineage>
</organism>